<dbReference type="EMBL" id="X61276">
    <property type="protein sequence ID" value="CAA43582.1"/>
    <property type="molecule type" value="Genomic_DNA"/>
</dbReference>
<dbReference type="EMBL" id="I26204">
    <property type="status" value="NOT_ANNOTATED_CDS"/>
    <property type="molecule type" value="Unassigned_DNA"/>
</dbReference>
<dbReference type="PIR" id="S23326">
    <property type="entry name" value="S23326"/>
</dbReference>
<dbReference type="RefSeq" id="WP_115243394.1">
    <property type="nucleotide sequence ID" value="NZ_CAAHQD010000002.1"/>
</dbReference>
<dbReference type="SMR" id="P50469"/>
<dbReference type="STRING" id="1314.SD89_08955"/>
<dbReference type="GO" id="GO:0005576">
    <property type="term" value="C:extracellular region"/>
    <property type="evidence" value="ECO:0007669"/>
    <property type="project" value="UniProtKB-KW"/>
</dbReference>
<dbReference type="GO" id="GO:0006909">
    <property type="term" value="P:phagocytosis"/>
    <property type="evidence" value="ECO:0007669"/>
    <property type="project" value="UniProtKB-KW"/>
</dbReference>
<dbReference type="Gene3D" id="6.10.250.460">
    <property type="match status" value="3"/>
</dbReference>
<dbReference type="InterPro" id="IPR019931">
    <property type="entry name" value="LPXTG_anchor"/>
</dbReference>
<dbReference type="InterPro" id="IPR019950">
    <property type="entry name" value="M_anchor"/>
</dbReference>
<dbReference type="InterPro" id="IPR003345">
    <property type="entry name" value="M_repeat"/>
</dbReference>
<dbReference type="InterPro" id="IPR049896">
    <property type="entry name" value="SMCR"/>
</dbReference>
<dbReference type="InterPro" id="IPR049895">
    <property type="entry name" value="SMDRR"/>
</dbReference>
<dbReference type="InterPro" id="IPR005877">
    <property type="entry name" value="YSIRK_signal_dom"/>
</dbReference>
<dbReference type="NCBIfam" id="TIGR01167">
    <property type="entry name" value="LPXTG_anchor"/>
    <property type="match status" value="1"/>
</dbReference>
<dbReference type="NCBIfam" id="TIGR01168">
    <property type="entry name" value="YSIRK_signal"/>
    <property type="match status" value="1"/>
</dbReference>
<dbReference type="Pfam" id="PF00746">
    <property type="entry name" value="Gram_pos_anchor"/>
    <property type="match status" value="1"/>
</dbReference>
<dbReference type="Pfam" id="PF02370">
    <property type="entry name" value="M"/>
    <property type="match status" value="3"/>
</dbReference>
<dbReference type="Pfam" id="PF04650">
    <property type="entry name" value="YSIRK_signal"/>
    <property type="match status" value="1"/>
</dbReference>
<dbReference type="PRINTS" id="PR00015">
    <property type="entry name" value="GPOSANCHOR"/>
</dbReference>
<dbReference type="PROSITE" id="PS50847">
    <property type="entry name" value="GRAM_POS_ANCHORING"/>
    <property type="match status" value="1"/>
</dbReference>
<dbReference type="PROSITE" id="PS52028">
    <property type="entry name" value="SMCR"/>
    <property type="match status" value="3"/>
</dbReference>
<dbReference type="PROSITE" id="PS52030">
    <property type="entry name" value="SMDRR"/>
    <property type="match status" value="1"/>
</dbReference>
<reference key="1">
    <citation type="journal article" date="1992" name="Infect. Immun.">
        <title>Nucleotide sequences of two adjacent M or M-like protein genes of group A streptococci: different RNA transcript levels and identification of a unique immunoglobulin A-binding protein.</title>
        <authorList>
            <person name="Bessen D.E."/>
            <person name="Fischetti V.A."/>
        </authorList>
    </citation>
    <scope>NUCLEOTIDE SEQUENCE [GENOMIC DNA]</scope>
    <source>
        <strain>T2/44/RB4/119</strain>
    </source>
</reference>
<reference key="2">
    <citation type="patent" date="1996-09-17" number="US5556944">
        <title>Immunoglobulin A binding protein.</title>
        <authorList>
            <person name="Fischetti V.A."/>
            <person name="Bessen D.E."/>
        </authorList>
    </citation>
    <scope>NUCLEOTIDE SEQUENCE [GENOMIC DNA]</scope>
</reference>
<gene>
    <name type="primary">emmL2.2</name>
</gene>
<keyword id="KW-0134">Cell wall</keyword>
<keyword id="KW-0175">Coiled coil</keyword>
<keyword id="KW-0572">Peptidoglycan-anchor</keyword>
<keyword id="KW-0581">Phagocytosis</keyword>
<keyword id="KW-0677">Repeat</keyword>
<keyword id="KW-0964">Secreted</keyword>
<keyword id="KW-0732">Signal</keyword>
<keyword id="KW-0843">Virulence</keyword>
<comment type="function">
    <text>This protein is one of the different antigenic serotypes of protein M. Protein M is closely associated with virulence of the bacterium and can render the organism resistant to phagocytosis.</text>
</comment>
<comment type="subcellular location">
    <subcellularLocation>
        <location evidence="2">Secreted</location>
        <location evidence="2">Cell wall</location>
        <topology evidence="2">Peptidoglycan-anchor</topology>
    </subcellularLocation>
</comment>
<comment type="similarity">
    <text evidence="6">Belongs to the M protein family.</text>
</comment>
<evidence type="ECO:0000255" key="1"/>
<evidence type="ECO:0000255" key="2">
    <source>
        <dbReference type="PROSITE-ProRule" id="PRU00477"/>
    </source>
</evidence>
<evidence type="ECO:0000255" key="3">
    <source>
        <dbReference type="PROSITE-ProRule" id="PRU01372"/>
    </source>
</evidence>
<evidence type="ECO:0000255" key="4">
    <source>
        <dbReference type="PROSITE-ProRule" id="PRU01374"/>
    </source>
</evidence>
<evidence type="ECO:0000256" key="5">
    <source>
        <dbReference type="SAM" id="MobiDB-lite"/>
    </source>
</evidence>
<evidence type="ECO:0000305" key="6"/>
<accession>P50469</accession>
<sequence>MARQQTKKNYSLRKLKTGTASVAVALTVLGAGFANQTEVRADEAKKMEVKESEKESQYKTLALRGENADLRNVNAKYLEKINAEEEKNKKLEAINKELNENYYKLQDGIDALEKEKEDLKTTLAKTTKENEISEASRKGLSRDLEASRTAKKELEAKHQKLEAENKKLTEGNQVSEASRKGLSNDLEASRAAKKELEAKYQKLETDHQALEAKHQKLEADYQVSETSRKGLSRDLEASREANKKVTSELTQAKAQLSALEESKKLSEKEKAELQAKLDAQGKALKEQLAKQTEELAKLRAEKAAGSKTPATKPANKERSGRAAQTATRPSQNKGMRSQLPSTGEAANPFFTAAAATVMVSAGMLALKRKEEN</sequence>
<protein>
    <recommendedName>
        <fullName>M protein, serotype 2.2</fullName>
    </recommendedName>
</protein>
<feature type="signal peptide" evidence="1">
    <location>
        <begin position="1"/>
        <end position="41"/>
    </location>
</feature>
<feature type="chain" id="PRO_0000005613" description="M protein, serotype 2.2">
    <location>
        <begin position="42"/>
        <end position="342"/>
    </location>
</feature>
<feature type="propeptide" id="PRO_0000005614" description="Removed by sortase" evidence="2">
    <location>
        <begin position="343"/>
        <end position="372"/>
    </location>
</feature>
<feature type="repeat" description="C 1" evidence="3">
    <location>
        <begin position="124"/>
        <end position="158"/>
    </location>
</feature>
<feature type="repeat" description="C 2" evidence="3">
    <location>
        <begin position="166"/>
        <end position="200"/>
    </location>
</feature>
<feature type="repeat" description="C 3" evidence="3">
    <location>
        <begin position="215"/>
        <end position="249"/>
    </location>
</feature>
<feature type="repeat" description="D 1" evidence="4">
    <location>
        <begin position="275"/>
        <end position="280"/>
    </location>
</feature>
<feature type="repeat" description="D 2" evidence="4">
    <location>
        <begin position="281"/>
        <end position="286"/>
    </location>
</feature>
<feature type="repeat" description="D 3" evidence="4">
    <location>
        <begin position="289"/>
        <end position="294"/>
    </location>
</feature>
<feature type="repeat" description="D 4" evidence="4">
    <location>
        <begin position="296"/>
        <end position="301"/>
    </location>
</feature>
<feature type="region of interest" description="Disordered" evidence="5">
    <location>
        <begin position="125"/>
        <end position="191"/>
    </location>
</feature>
<feature type="region of interest" description="Disordered" evidence="5">
    <location>
        <begin position="211"/>
        <end position="274"/>
    </location>
</feature>
<feature type="region of interest" description="Disordered" evidence="5">
    <location>
        <begin position="295"/>
        <end position="344"/>
    </location>
</feature>
<feature type="short sequence motif" description="LPXTG sorting signal" evidence="2">
    <location>
        <begin position="339"/>
        <end position="343"/>
    </location>
</feature>
<feature type="compositionally biased region" description="Basic and acidic residues" evidence="5">
    <location>
        <begin position="125"/>
        <end position="169"/>
    </location>
</feature>
<feature type="compositionally biased region" description="Basic and acidic residues" evidence="5">
    <location>
        <begin position="226"/>
        <end position="246"/>
    </location>
</feature>
<feature type="compositionally biased region" description="Basic and acidic residues" evidence="5">
    <location>
        <begin position="260"/>
        <end position="274"/>
    </location>
</feature>
<feature type="compositionally biased region" description="Basic and acidic residues" evidence="5">
    <location>
        <begin position="295"/>
        <end position="304"/>
    </location>
</feature>
<feature type="compositionally biased region" description="Polar residues" evidence="5">
    <location>
        <begin position="322"/>
        <end position="341"/>
    </location>
</feature>
<feature type="modified residue" description="Pentaglycyl murein peptidoglycan amidated threonine" evidence="2">
    <location>
        <position position="342"/>
    </location>
</feature>
<proteinExistence type="inferred from homology"/>
<organism>
    <name type="scientific">Streptococcus pyogenes</name>
    <dbReference type="NCBI Taxonomy" id="1314"/>
    <lineage>
        <taxon>Bacteria</taxon>
        <taxon>Bacillati</taxon>
        <taxon>Bacillota</taxon>
        <taxon>Bacilli</taxon>
        <taxon>Lactobacillales</taxon>
        <taxon>Streptococcaceae</taxon>
        <taxon>Streptococcus</taxon>
    </lineage>
</organism>
<name>M22_STRPY</name>